<gene>
    <name type="primary">petE</name>
    <name type="ordered locus">all0258</name>
</gene>
<name>PLAS_NOSS1</name>
<accession>P46444</accession>
<comment type="function">
    <text>Participates in electron transfer between P700 and the cytochrome b6-f complex in photosystem I.</text>
</comment>
<comment type="cofactor">
    <cofactor evidence="2 3 4">
        <name>Cu(2+)</name>
        <dbReference type="ChEBI" id="CHEBI:29036"/>
    </cofactor>
</comment>
<comment type="subcellular location">
    <subcellularLocation>
        <location evidence="2 3">Cellular thylakoid membrane</location>
        <topology evidence="2 3">Peripheral membrane protein</topology>
        <orientation evidence="2 3">Lumenal side</orientation>
    </subcellularLocation>
    <text>Loosely bound to the thylakoid inner membrane surface.</text>
</comment>
<comment type="similarity">
    <text evidence="2">Belongs to the plastocyanin family.</text>
</comment>
<dbReference type="EMBL" id="L19417">
    <property type="protein sequence ID" value="AAA59364.1"/>
    <property type="molecule type" value="Genomic_DNA"/>
</dbReference>
<dbReference type="EMBL" id="BA000019">
    <property type="protein sequence ID" value="BAB77782.1"/>
    <property type="molecule type" value="Genomic_DNA"/>
</dbReference>
<dbReference type="PIR" id="AB1839">
    <property type="entry name" value="AB1839"/>
</dbReference>
<dbReference type="PIR" id="I39614">
    <property type="entry name" value="I39614"/>
</dbReference>
<dbReference type="RefSeq" id="WP_010994435.1">
    <property type="nucleotide sequence ID" value="NZ_RSCN01000032.1"/>
</dbReference>
<dbReference type="PDB" id="1TU2">
    <property type="method" value="NMR"/>
    <property type="chains" value="A=35-139"/>
</dbReference>
<dbReference type="PDB" id="2CJ3">
    <property type="method" value="X-ray"/>
    <property type="resolution" value="1.70 A"/>
    <property type="chains" value="A/B=35-139"/>
</dbReference>
<dbReference type="PDBsum" id="1TU2"/>
<dbReference type="PDBsum" id="2CJ3"/>
<dbReference type="BMRB" id="P46444"/>
<dbReference type="SMR" id="P46444"/>
<dbReference type="STRING" id="103690.gene:10492266"/>
<dbReference type="TCDB" id="3.D.3.5.6">
    <property type="family name" value="the proton-translocating quinol:cytochrome c reductase (qcr) superfamily"/>
</dbReference>
<dbReference type="KEGG" id="ana:all0258"/>
<dbReference type="eggNOG" id="COG3794">
    <property type="taxonomic scope" value="Bacteria"/>
</dbReference>
<dbReference type="OrthoDB" id="680163at2"/>
<dbReference type="EvolutionaryTrace" id="P46444"/>
<dbReference type="Proteomes" id="UP000002483">
    <property type="component" value="Chromosome"/>
</dbReference>
<dbReference type="GO" id="GO:0031676">
    <property type="term" value="C:plasma membrane-derived thylakoid membrane"/>
    <property type="evidence" value="ECO:0007669"/>
    <property type="project" value="UniProtKB-SubCell"/>
</dbReference>
<dbReference type="GO" id="GO:0005507">
    <property type="term" value="F:copper ion binding"/>
    <property type="evidence" value="ECO:0007669"/>
    <property type="project" value="UniProtKB-UniRule"/>
</dbReference>
<dbReference type="GO" id="GO:0009055">
    <property type="term" value="F:electron transfer activity"/>
    <property type="evidence" value="ECO:0007669"/>
    <property type="project" value="UniProtKB-UniRule"/>
</dbReference>
<dbReference type="CDD" id="cd04219">
    <property type="entry name" value="Plastocyanin"/>
    <property type="match status" value="1"/>
</dbReference>
<dbReference type="Gene3D" id="2.60.40.420">
    <property type="entry name" value="Cupredoxins - blue copper proteins"/>
    <property type="match status" value="1"/>
</dbReference>
<dbReference type="HAMAP" id="MF_00566">
    <property type="entry name" value="Cytb6_f_plastocyanin"/>
    <property type="match status" value="1"/>
</dbReference>
<dbReference type="InterPro" id="IPR000923">
    <property type="entry name" value="BlueCu_1"/>
</dbReference>
<dbReference type="InterPro" id="IPR028871">
    <property type="entry name" value="BlueCu_1_BS"/>
</dbReference>
<dbReference type="InterPro" id="IPR001235">
    <property type="entry name" value="Copper_blue_Plastocyanin"/>
</dbReference>
<dbReference type="InterPro" id="IPR008972">
    <property type="entry name" value="Cupredoxin"/>
</dbReference>
<dbReference type="InterPro" id="IPR002387">
    <property type="entry name" value="Plastocyanin"/>
</dbReference>
<dbReference type="InterPro" id="IPR023511">
    <property type="entry name" value="Plastocyanin_cyanobac"/>
</dbReference>
<dbReference type="NCBIfam" id="TIGR02656">
    <property type="entry name" value="cyanin_plasto"/>
    <property type="match status" value="1"/>
</dbReference>
<dbReference type="PANTHER" id="PTHR34192">
    <property type="entry name" value="PLASTOCYANIN MAJOR ISOFORM, CHLOROPLASTIC-RELATED"/>
    <property type="match status" value="1"/>
</dbReference>
<dbReference type="PANTHER" id="PTHR34192:SF10">
    <property type="entry name" value="PLASTOCYANIN MAJOR ISOFORM, CHLOROPLASTIC-RELATED"/>
    <property type="match status" value="1"/>
</dbReference>
<dbReference type="Pfam" id="PF00127">
    <property type="entry name" value="Copper-bind"/>
    <property type="match status" value="1"/>
</dbReference>
<dbReference type="PRINTS" id="PR00156">
    <property type="entry name" value="COPPERBLUE"/>
</dbReference>
<dbReference type="PRINTS" id="PR00157">
    <property type="entry name" value="PLASTOCYANIN"/>
</dbReference>
<dbReference type="SUPFAM" id="SSF49503">
    <property type="entry name" value="Cupredoxins"/>
    <property type="match status" value="1"/>
</dbReference>
<dbReference type="PROSITE" id="PS00196">
    <property type="entry name" value="COPPER_BLUE"/>
    <property type="match status" value="1"/>
</dbReference>
<feature type="signal peptide" evidence="1">
    <location>
        <begin position="1"/>
        <end position="34"/>
    </location>
</feature>
<feature type="chain" id="PRO_0000002899" description="Plastocyanin">
    <location>
        <begin position="35"/>
        <end position="139"/>
    </location>
</feature>
<feature type="domain" description="Plastocyanin-like">
    <location>
        <begin position="35"/>
        <end position="139"/>
    </location>
</feature>
<feature type="binding site" evidence="3 4">
    <location>
        <position position="73"/>
    </location>
    <ligand>
        <name>Cu cation</name>
        <dbReference type="ChEBI" id="CHEBI:23378"/>
    </ligand>
</feature>
<feature type="binding site" evidence="3 4">
    <location>
        <position position="123"/>
    </location>
    <ligand>
        <name>Cu cation</name>
        <dbReference type="ChEBI" id="CHEBI:23378"/>
    </ligand>
</feature>
<feature type="binding site" evidence="3 4">
    <location>
        <position position="126"/>
    </location>
    <ligand>
        <name>Cu cation</name>
        <dbReference type="ChEBI" id="CHEBI:23378"/>
    </ligand>
</feature>
<feature type="binding site" evidence="3 4">
    <location>
        <position position="131"/>
    </location>
    <ligand>
        <name>Cu cation</name>
        <dbReference type="ChEBI" id="CHEBI:23378"/>
    </ligand>
</feature>
<feature type="strand" evidence="5">
    <location>
        <begin position="36"/>
        <end position="42"/>
    </location>
</feature>
<feature type="strand" evidence="5">
    <location>
        <begin position="48"/>
        <end position="57"/>
    </location>
</feature>
<feature type="strand" evidence="5">
    <location>
        <begin position="62"/>
        <end position="67"/>
    </location>
</feature>
<feature type="strand" evidence="5">
    <location>
        <begin position="73"/>
        <end position="77"/>
    </location>
</feature>
<feature type="strand" evidence="5">
    <location>
        <begin position="79"/>
        <end position="82"/>
    </location>
</feature>
<feature type="helix" evidence="5">
    <location>
        <begin position="87"/>
        <end position="93"/>
    </location>
</feature>
<feature type="strand" evidence="5">
    <location>
        <begin position="95"/>
        <end position="99"/>
    </location>
</feature>
<feature type="strand" evidence="5">
    <location>
        <begin position="105"/>
        <end position="109"/>
    </location>
</feature>
<feature type="strand" evidence="5">
    <location>
        <begin position="116"/>
        <end position="122"/>
    </location>
</feature>
<feature type="turn" evidence="5">
    <location>
        <begin position="124"/>
        <end position="126"/>
    </location>
</feature>
<feature type="helix" evidence="5">
    <location>
        <begin position="127"/>
        <end position="129"/>
    </location>
</feature>
<feature type="strand" evidence="5">
    <location>
        <begin position="132"/>
        <end position="137"/>
    </location>
</feature>
<proteinExistence type="evidence at protein level"/>
<reference key="1">
    <citation type="journal article" date="1994" name="Microbiology">
        <title>Cloning, sequencing and transcriptional studies of the genes for cytochrome c-553 and plastocyanin from Anabaena sp. PCC 7120.</title>
        <authorList>
            <person name="Ghassemian M."/>
            <person name="Wong B."/>
            <person name="Ferreira F."/>
            <person name="Markley J.L."/>
            <person name="Straus N.A."/>
        </authorList>
    </citation>
    <scope>NUCLEOTIDE SEQUENCE [GENOMIC DNA]</scope>
</reference>
<reference key="2">
    <citation type="journal article" date="2001" name="DNA Res.">
        <title>Complete genomic sequence of the filamentous nitrogen-fixing cyanobacterium Anabaena sp. strain PCC 7120.</title>
        <authorList>
            <person name="Kaneko T."/>
            <person name="Nakamura Y."/>
            <person name="Wolk C.P."/>
            <person name="Kuritz T."/>
            <person name="Sasamoto S."/>
            <person name="Watanabe A."/>
            <person name="Iriguchi M."/>
            <person name="Ishikawa A."/>
            <person name="Kawashima K."/>
            <person name="Kimura T."/>
            <person name="Kishida Y."/>
            <person name="Kohara M."/>
            <person name="Matsumoto M."/>
            <person name="Matsuno A."/>
            <person name="Muraki A."/>
            <person name="Nakazaki N."/>
            <person name="Shimpo S."/>
            <person name="Sugimoto M."/>
            <person name="Takazawa M."/>
            <person name="Yamada M."/>
            <person name="Yasuda M."/>
            <person name="Tabata S."/>
        </authorList>
    </citation>
    <scope>NUCLEOTIDE SEQUENCE [LARGE SCALE GENOMIC DNA]</scope>
    <source>
        <strain>PCC 7120 / SAG 25.82 / UTEX 2576</strain>
    </source>
</reference>
<reference key="3">
    <citation type="journal article" date="2005" name="J. Biol. Chem.">
        <title>Structure of the complex between plastocyanin and cytochrome f from the cyanobacterium Nostoc sp. PCC 7119 as determined by paramagnetic NMR. The balance between electrostatic and hydrophobic interactions within the transient complex determines the relative orientation of the two proteins.</title>
        <authorList>
            <person name="Diaz-Moreno I."/>
            <person name="Diaz-Quintana A."/>
            <person name="De la Rosa M.A."/>
            <person name="Ubbink M."/>
        </authorList>
    </citation>
    <scope>STRUCTURE BY NMR OF 35-139 IN COMPLEX WITH COPPER</scope>
    <scope>COFACTOR</scope>
    <scope>SUBCELLULAR LOCATION</scope>
</reference>
<reference key="4">
    <citation type="submission" date="2006-03" db="PDB data bank">
        <title>The crystal structure and electron-transfer reactivity of plastocyanin from a cyanobacterium, Anabaena variabilis.</title>
        <authorList>
            <person name="Fields B.A."/>
            <person name="Duff A.P."/>
            <person name="Govinderaju K."/>
            <person name="Jackman M.P."/>
            <person name="Lee H.W."/>
            <person name="Church W.B."/>
            <person name="Guss J.M."/>
            <person name="Sykes A.G."/>
            <person name="Freeman H.C."/>
        </authorList>
    </citation>
    <scope>X-RAY CRYSTALLOGRAPHY (1.70 ANGSTROMS) OF 35-139 IN COMPLEX WITH COPPER</scope>
</reference>
<evidence type="ECO:0000250" key="1"/>
<evidence type="ECO:0000255" key="2">
    <source>
        <dbReference type="HAMAP-Rule" id="MF_00566"/>
    </source>
</evidence>
<evidence type="ECO:0000269" key="3">
    <source>
    </source>
</evidence>
<evidence type="ECO:0000269" key="4">
    <source ref="4"/>
</evidence>
<evidence type="ECO:0007829" key="5">
    <source>
        <dbReference type="PDB" id="2CJ3"/>
    </source>
</evidence>
<organism>
    <name type="scientific">Nostoc sp. (strain PCC 7120 / SAG 25.82 / UTEX 2576)</name>
    <dbReference type="NCBI Taxonomy" id="103690"/>
    <lineage>
        <taxon>Bacteria</taxon>
        <taxon>Bacillati</taxon>
        <taxon>Cyanobacteriota</taxon>
        <taxon>Cyanophyceae</taxon>
        <taxon>Nostocales</taxon>
        <taxon>Nostocaceae</taxon>
        <taxon>Nostoc</taxon>
    </lineage>
</organism>
<protein>
    <recommendedName>
        <fullName>Plastocyanin</fullName>
    </recommendedName>
</protein>
<sequence length="139" mass="14619">MKLIAASLRRLSLAVLTVLLVVSSFAVFTPSASAETYTVKLGSDKGLLVFEPAKLTIKPGDTVEFLNNKVPPHNVVFDAALNPAKSADLAKSLSHKQLLMSPGQSTSTTFPADAPAGEYTFYCEPHRGAGMVGKITVAG</sequence>
<keyword id="KW-0002">3D-structure</keyword>
<keyword id="KW-0186">Copper</keyword>
<keyword id="KW-0249">Electron transport</keyword>
<keyword id="KW-0472">Membrane</keyword>
<keyword id="KW-0479">Metal-binding</keyword>
<keyword id="KW-1185">Reference proteome</keyword>
<keyword id="KW-0732">Signal</keyword>
<keyword id="KW-0793">Thylakoid</keyword>
<keyword id="KW-0813">Transport</keyword>